<gene>
    <name evidence="1" type="primary">metN2</name>
    <name type="ordered locus">EF_2498</name>
</gene>
<sequence length="345" mass="38615">MALIELRHVKKEFSGKAGKVTALKDIDLTVESGDIYGIIGYSGAGKSTLVRLLNGLETPTEGEVEIQGQDIALLPNKELRNFRKKIGMIFQHFNLLWSRTVLENIMLPLEIAGVPKQNRKSRAEELIKLVGLEGRETAYPSQLSGGQKQRVGIARALANNPDILLCDEATSALDPQTTDEVLELLLKINQELNLTVVLITHEMHVIRKICNRVAVMEYGEIVEEGKVIDIFKKPQTEIAKRFIQQEADKNIEETELVVEEMLEQYPNGKIVRLLFHGEQAKLPIISHIVQEYQVEVSIIQGNIQQTKQGAVGSLYIQLLGEEQNILAAIEGLRKLRVETEVIGNE</sequence>
<proteinExistence type="evidence at protein level"/>
<name>METN2_ENTFA</name>
<reference key="1">
    <citation type="journal article" date="2003" name="Science">
        <title>Role of mobile DNA in the evolution of vancomycin-resistant Enterococcus faecalis.</title>
        <authorList>
            <person name="Paulsen I.T."/>
            <person name="Banerjei L."/>
            <person name="Myers G.S.A."/>
            <person name="Nelson K.E."/>
            <person name="Seshadri R."/>
            <person name="Read T.D."/>
            <person name="Fouts D.E."/>
            <person name="Eisen J.A."/>
            <person name="Gill S.R."/>
            <person name="Heidelberg J.F."/>
            <person name="Tettelin H."/>
            <person name="Dodson R.J."/>
            <person name="Umayam L.A."/>
            <person name="Brinkac L.M."/>
            <person name="Beanan M.J."/>
            <person name="Daugherty S.C."/>
            <person name="DeBoy R.T."/>
            <person name="Durkin S.A."/>
            <person name="Kolonay J.F."/>
            <person name="Madupu R."/>
            <person name="Nelson W.C."/>
            <person name="Vamathevan J.J."/>
            <person name="Tran B."/>
            <person name="Upton J."/>
            <person name="Hansen T."/>
            <person name="Shetty J."/>
            <person name="Khouri H.M."/>
            <person name="Utterback T.R."/>
            <person name="Radune D."/>
            <person name="Ketchum K.A."/>
            <person name="Dougherty B.A."/>
            <person name="Fraser C.M."/>
        </authorList>
    </citation>
    <scope>NUCLEOTIDE SEQUENCE [LARGE SCALE GENOMIC DNA]</scope>
    <source>
        <strain>ATCC 700802 / V583</strain>
    </source>
</reference>
<dbReference type="EC" id="7.4.2.11" evidence="1"/>
<dbReference type="EMBL" id="AE016830">
    <property type="protein sequence ID" value="AAO82214.1"/>
    <property type="molecule type" value="Genomic_DNA"/>
</dbReference>
<dbReference type="RefSeq" id="NP_816144.1">
    <property type="nucleotide sequence ID" value="NC_004668.1"/>
</dbReference>
<dbReference type="RefSeq" id="WP_002356639.1">
    <property type="nucleotide sequence ID" value="NZ_KE136528.1"/>
</dbReference>
<dbReference type="PDB" id="2QSW">
    <property type="method" value="X-ray"/>
    <property type="resolution" value="1.50 A"/>
    <property type="chains" value="A=249-345"/>
</dbReference>
<dbReference type="PDBsum" id="2QSW"/>
<dbReference type="SMR" id="Q831K6"/>
<dbReference type="STRING" id="226185.EF_2498"/>
<dbReference type="EnsemblBacteria" id="AAO82214">
    <property type="protein sequence ID" value="AAO82214"/>
    <property type="gene ID" value="EF_2498"/>
</dbReference>
<dbReference type="KEGG" id="efa:EF2498"/>
<dbReference type="PATRIC" id="fig|226185.45.peg.1050"/>
<dbReference type="eggNOG" id="COG1135">
    <property type="taxonomic scope" value="Bacteria"/>
</dbReference>
<dbReference type="HOGENOM" id="CLU_000604_1_3_9"/>
<dbReference type="EvolutionaryTrace" id="Q831K6"/>
<dbReference type="Proteomes" id="UP000001415">
    <property type="component" value="Chromosome"/>
</dbReference>
<dbReference type="GO" id="GO:0005886">
    <property type="term" value="C:plasma membrane"/>
    <property type="evidence" value="ECO:0007669"/>
    <property type="project" value="UniProtKB-SubCell"/>
</dbReference>
<dbReference type="GO" id="GO:0033232">
    <property type="term" value="F:ABC-type D-methionine transporter activity"/>
    <property type="evidence" value="ECO:0007669"/>
    <property type="project" value="UniProtKB-EC"/>
</dbReference>
<dbReference type="GO" id="GO:0005524">
    <property type="term" value="F:ATP binding"/>
    <property type="evidence" value="ECO:0007669"/>
    <property type="project" value="UniProtKB-KW"/>
</dbReference>
<dbReference type="GO" id="GO:0016887">
    <property type="term" value="F:ATP hydrolysis activity"/>
    <property type="evidence" value="ECO:0007669"/>
    <property type="project" value="InterPro"/>
</dbReference>
<dbReference type="CDD" id="cd03258">
    <property type="entry name" value="ABC_MetN_methionine_transporter"/>
    <property type="match status" value="1"/>
</dbReference>
<dbReference type="FunFam" id="3.40.50.300:FF:000032">
    <property type="entry name" value="Export ABC transporter ATP-binding protein"/>
    <property type="match status" value="1"/>
</dbReference>
<dbReference type="Gene3D" id="3.30.70.260">
    <property type="match status" value="1"/>
</dbReference>
<dbReference type="Gene3D" id="3.40.50.300">
    <property type="entry name" value="P-loop containing nucleotide triphosphate hydrolases"/>
    <property type="match status" value="1"/>
</dbReference>
<dbReference type="InterPro" id="IPR003593">
    <property type="entry name" value="AAA+_ATPase"/>
</dbReference>
<dbReference type="InterPro" id="IPR003439">
    <property type="entry name" value="ABC_transporter-like_ATP-bd"/>
</dbReference>
<dbReference type="InterPro" id="IPR017871">
    <property type="entry name" value="ABC_transporter-like_CS"/>
</dbReference>
<dbReference type="InterPro" id="IPR045865">
    <property type="entry name" value="ACT-like_dom_sf"/>
</dbReference>
<dbReference type="InterPro" id="IPR041701">
    <property type="entry name" value="MetN_ABC"/>
</dbReference>
<dbReference type="InterPro" id="IPR050086">
    <property type="entry name" value="MetN_ABC_transporter-like"/>
</dbReference>
<dbReference type="InterPro" id="IPR018449">
    <property type="entry name" value="NIL_domain"/>
</dbReference>
<dbReference type="InterPro" id="IPR027417">
    <property type="entry name" value="P-loop_NTPase"/>
</dbReference>
<dbReference type="PANTHER" id="PTHR43166">
    <property type="entry name" value="AMINO ACID IMPORT ATP-BINDING PROTEIN"/>
    <property type="match status" value="1"/>
</dbReference>
<dbReference type="PANTHER" id="PTHR43166:SF36">
    <property type="entry name" value="METHIONINE IMPORT ATP-BINDING PROTEIN METN 2"/>
    <property type="match status" value="1"/>
</dbReference>
<dbReference type="Pfam" id="PF00005">
    <property type="entry name" value="ABC_tran"/>
    <property type="match status" value="1"/>
</dbReference>
<dbReference type="Pfam" id="PF09383">
    <property type="entry name" value="NIL"/>
    <property type="match status" value="1"/>
</dbReference>
<dbReference type="SMART" id="SM00382">
    <property type="entry name" value="AAA"/>
    <property type="match status" value="1"/>
</dbReference>
<dbReference type="SMART" id="SM00930">
    <property type="entry name" value="NIL"/>
    <property type="match status" value="1"/>
</dbReference>
<dbReference type="SUPFAM" id="SSF55021">
    <property type="entry name" value="ACT-like"/>
    <property type="match status" value="1"/>
</dbReference>
<dbReference type="SUPFAM" id="SSF52540">
    <property type="entry name" value="P-loop containing nucleoside triphosphate hydrolases"/>
    <property type="match status" value="1"/>
</dbReference>
<dbReference type="PROSITE" id="PS00211">
    <property type="entry name" value="ABC_TRANSPORTER_1"/>
    <property type="match status" value="1"/>
</dbReference>
<dbReference type="PROSITE" id="PS50893">
    <property type="entry name" value="ABC_TRANSPORTER_2"/>
    <property type="match status" value="1"/>
</dbReference>
<dbReference type="PROSITE" id="PS51264">
    <property type="entry name" value="METN"/>
    <property type="match status" value="1"/>
</dbReference>
<evidence type="ECO:0000255" key="1">
    <source>
        <dbReference type="HAMAP-Rule" id="MF_01719"/>
    </source>
</evidence>
<evidence type="ECO:0007829" key="2">
    <source>
        <dbReference type="PDB" id="2QSW"/>
    </source>
</evidence>
<protein>
    <recommendedName>
        <fullName evidence="1">Methionine import ATP-binding protein MetN 2</fullName>
        <ecNumber evidence="1">7.4.2.11</ecNumber>
    </recommendedName>
</protein>
<organism>
    <name type="scientific">Enterococcus faecalis (strain ATCC 700802 / V583)</name>
    <dbReference type="NCBI Taxonomy" id="226185"/>
    <lineage>
        <taxon>Bacteria</taxon>
        <taxon>Bacillati</taxon>
        <taxon>Bacillota</taxon>
        <taxon>Bacilli</taxon>
        <taxon>Lactobacillales</taxon>
        <taxon>Enterococcaceae</taxon>
        <taxon>Enterococcus</taxon>
    </lineage>
</organism>
<comment type="function">
    <text evidence="1">Part of the ABC transporter complex MetNIQ involved in methionine import. Responsible for energy coupling to the transport system.</text>
</comment>
<comment type="catalytic activity">
    <reaction evidence="1">
        <text>L-methionine(out) + ATP + H2O = L-methionine(in) + ADP + phosphate + H(+)</text>
        <dbReference type="Rhea" id="RHEA:29779"/>
        <dbReference type="ChEBI" id="CHEBI:15377"/>
        <dbReference type="ChEBI" id="CHEBI:15378"/>
        <dbReference type="ChEBI" id="CHEBI:30616"/>
        <dbReference type="ChEBI" id="CHEBI:43474"/>
        <dbReference type="ChEBI" id="CHEBI:57844"/>
        <dbReference type="ChEBI" id="CHEBI:456216"/>
        <dbReference type="EC" id="7.4.2.11"/>
    </reaction>
</comment>
<comment type="catalytic activity">
    <reaction evidence="1">
        <text>D-methionine(out) + ATP + H2O = D-methionine(in) + ADP + phosphate + H(+)</text>
        <dbReference type="Rhea" id="RHEA:29767"/>
        <dbReference type="ChEBI" id="CHEBI:15377"/>
        <dbReference type="ChEBI" id="CHEBI:15378"/>
        <dbReference type="ChEBI" id="CHEBI:30616"/>
        <dbReference type="ChEBI" id="CHEBI:43474"/>
        <dbReference type="ChEBI" id="CHEBI:57932"/>
        <dbReference type="ChEBI" id="CHEBI:456216"/>
        <dbReference type="EC" id="7.4.2.11"/>
    </reaction>
</comment>
<comment type="subunit">
    <text evidence="1">The complex is composed of two ATP-binding proteins (MetN), two transmembrane proteins (MetI) and a solute-binding protein (MetQ).</text>
</comment>
<comment type="subcellular location">
    <subcellularLocation>
        <location evidence="1">Cell membrane</location>
        <topology evidence="1">Peripheral membrane protein</topology>
    </subcellularLocation>
</comment>
<comment type="similarity">
    <text evidence="1">Belongs to the ABC transporter superfamily. Methionine importer (TC 3.A.1.24) family.</text>
</comment>
<feature type="chain" id="PRO_0000270293" description="Methionine import ATP-binding protein MetN 2">
    <location>
        <begin position="1"/>
        <end position="345"/>
    </location>
</feature>
<feature type="domain" description="ABC transporter" evidence="1">
    <location>
        <begin position="4"/>
        <end position="243"/>
    </location>
</feature>
<feature type="binding site" evidence="1">
    <location>
        <begin position="40"/>
        <end position="47"/>
    </location>
    <ligand>
        <name>ATP</name>
        <dbReference type="ChEBI" id="CHEBI:30616"/>
    </ligand>
</feature>
<feature type="helix" evidence="2">
    <location>
        <begin position="258"/>
        <end position="264"/>
    </location>
</feature>
<feature type="strand" evidence="2">
    <location>
        <begin position="267"/>
        <end position="277"/>
    </location>
</feature>
<feature type="helix" evidence="2">
    <location>
        <begin position="284"/>
        <end position="292"/>
    </location>
</feature>
<feature type="strand" evidence="2">
    <location>
        <begin position="295"/>
        <end position="306"/>
    </location>
</feature>
<feature type="strand" evidence="2">
    <location>
        <begin position="309"/>
        <end position="320"/>
    </location>
</feature>
<feature type="helix" evidence="2">
    <location>
        <begin position="322"/>
        <end position="334"/>
    </location>
</feature>
<feature type="strand" evidence="2">
    <location>
        <begin position="338"/>
        <end position="343"/>
    </location>
</feature>
<keyword id="KW-0002">3D-structure</keyword>
<keyword id="KW-0029">Amino-acid transport</keyword>
<keyword id="KW-0067">ATP-binding</keyword>
<keyword id="KW-1003">Cell membrane</keyword>
<keyword id="KW-0472">Membrane</keyword>
<keyword id="KW-0547">Nucleotide-binding</keyword>
<keyword id="KW-1185">Reference proteome</keyword>
<keyword id="KW-1278">Translocase</keyword>
<keyword id="KW-0813">Transport</keyword>
<accession>Q831K6</accession>